<comment type="function">
    <text evidence="1">Catalyzes the formation of S-adenosylmethionine (AdoMet) from methionine and ATP. The overall synthetic reaction is composed of two sequential steps, AdoMet formation and the subsequent tripolyphosphate hydrolysis which occurs prior to release of AdoMet from the enzyme.</text>
</comment>
<comment type="catalytic activity">
    <reaction evidence="1">
        <text>L-methionine + ATP + H2O = S-adenosyl-L-methionine + phosphate + diphosphate</text>
        <dbReference type="Rhea" id="RHEA:21080"/>
        <dbReference type="ChEBI" id="CHEBI:15377"/>
        <dbReference type="ChEBI" id="CHEBI:30616"/>
        <dbReference type="ChEBI" id="CHEBI:33019"/>
        <dbReference type="ChEBI" id="CHEBI:43474"/>
        <dbReference type="ChEBI" id="CHEBI:57844"/>
        <dbReference type="ChEBI" id="CHEBI:59789"/>
        <dbReference type="EC" id="2.5.1.6"/>
    </reaction>
</comment>
<comment type="cofactor">
    <cofactor evidence="1">
        <name>Mg(2+)</name>
        <dbReference type="ChEBI" id="CHEBI:18420"/>
    </cofactor>
    <text evidence="1">Binds 2 divalent ions per subunit.</text>
</comment>
<comment type="cofactor">
    <cofactor evidence="1">
        <name>K(+)</name>
        <dbReference type="ChEBI" id="CHEBI:29103"/>
    </cofactor>
    <text evidence="1">Binds 1 potassium ion per subunit.</text>
</comment>
<comment type="pathway">
    <text evidence="1">Amino-acid biosynthesis; S-adenosyl-L-methionine biosynthesis; S-adenosyl-L-methionine from L-methionine: step 1/1.</text>
</comment>
<comment type="subunit">
    <text evidence="1">Homotetramer; dimer of dimers.</text>
</comment>
<comment type="subcellular location">
    <subcellularLocation>
        <location evidence="1">Cytoplasm</location>
    </subcellularLocation>
</comment>
<comment type="similarity">
    <text evidence="1">Belongs to the AdoMet synthase family.</text>
</comment>
<feature type="chain" id="PRO_1000093020" description="S-adenosylmethionine synthase">
    <location>
        <begin position="1"/>
        <end position="394"/>
    </location>
</feature>
<feature type="region of interest" description="Flexible loop" evidence="1">
    <location>
        <begin position="104"/>
        <end position="114"/>
    </location>
</feature>
<feature type="binding site" description="in other chain" evidence="1">
    <location>
        <position position="18"/>
    </location>
    <ligand>
        <name>ATP</name>
        <dbReference type="ChEBI" id="CHEBI:30616"/>
        <note>ligand shared between two neighboring subunits</note>
    </ligand>
</feature>
<feature type="binding site" evidence="1">
    <location>
        <position position="20"/>
    </location>
    <ligand>
        <name>Mg(2+)</name>
        <dbReference type="ChEBI" id="CHEBI:18420"/>
    </ligand>
</feature>
<feature type="binding site" evidence="1">
    <location>
        <position position="46"/>
    </location>
    <ligand>
        <name>K(+)</name>
        <dbReference type="ChEBI" id="CHEBI:29103"/>
    </ligand>
</feature>
<feature type="binding site" description="in other chain" evidence="1">
    <location>
        <position position="59"/>
    </location>
    <ligand>
        <name>L-methionine</name>
        <dbReference type="ChEBI" id="CHEBI:57844"/>
        <note>ligand shared between two neighboring subunits</note>
    </ligand>
</feature>
<feature type="binding site" description="in other chain" evidence="1">
    <location>
        <position position="104"/>
    </location>
    <ligand>
        <name>L-methionine</name>
        <dbReference type="ChEBI" id="CHEBI:57844"/>
        <note>ligand shared between two neighboring subunits</note>
    </ligand>
</feature>
<feature type="binding site" description="in other chain" evidence="1">
    <location>
        <begin position="174"/>
        <end position="176"/>
    </location>
    <ligand>
        <name>ATP</name>
        <dbReference type="ChEBI" id="CHEBI:30616"/>
        <note>ligand shared between two neighboring subunits</note>
    </ligand>
</feature>
<feature type="binding site" description="in other chain" evidence="1">
    <location>
        <begin position="240"/>
        <end position="241"/>
    </location>
    <ligand>
        <name>ATP</name>
        <dbReference type="ChEBI" id="CHEBI:30616"/>
        <note>ligand shared between two neighboring subunits</note>
    </ligand>
</feature>
<feature type="binding site" evidence="1">
    <location>
        <position position="249"/>
    </location>
    <ligand>
        <name>ATP</name>
        <dbReference type="ChEBI" id="CHEBI:30616"/>
        <note>ligand shared between two neighboring subunits</note>
    </ligand>
</feature>
<feature type="binding site" evidence="1">
    <location>
        <position position="249"/>
    </location>
    <ligand>
        <name>L-methionine</name>
        <dbReference type="ChEBI" id="CHEBI:57844"/>
        <note>ligand shared between two neighboring subunits</note>
    </ligand>
</feature>
<feature type="binding site" description="in other chain" evidence="1">
    <location>
        <begin position="255"/>
        <end position="256"/>
    </location>
    <ligand>
        <name>ATP</name>
        <dbReference type="ChEBI" id="CHEBI:30616"/>
        <note>ligand shared between two neighboring subunits</note>
    </ligand>
</feature>
<feature type="binding site" evidence="1">
    <location>
        <position position="272"/>
    </location>
    <ligand>
        <name>ATP</name>
        <dbReference type="ChEBI" id="CHEBI:30616"/>
        <note>ligand shared between two neighboring subunits</note>
    </ligand>
</feature>
<feature type="binding site" evidence="1">
    <location>
        <position position="276"/>
    </location>
    <ligand>
        <name>ATP</name>
        <dbReference type="ChEBI" id="CHEBI:30616"/>
        <note>ligand shared between two neighboring subunits</note>
    </ligand>
</feature>
<feature type="binding site" description="in other chain" evidence="1">
    <location>
        <position position="280"/>
    </location>
    <ligand>
        <name>L-methionine</name>
        <dbReference type="ChEBI" id="CHEBI:57844"/>
        <note>ligand shared between two neighboring subunits</note>
    </ligand>
</feature>
<protein>
    <recommendedName>
        <fullName evidence="1">S-adenosylmethionine synthase</fullName>
        <shortName evidence="1">AdoMet synthase</shortName>
        <ecNumber evidence="1">2.5.1.6</ecNumber>
    </recommendedName>
    <alternativeName>
        <fullName evidence="1">MAT</fullName>
    </alternativeName>
    <alternativeName>
        <fullName evidence="1">Methionine adenosyltransferase</fullName>
    </alternativeName>
</protein>
<sequence>MSRNTPHIFTSESVGEGHPDKVADYISDSILDACLAQDKTSRVACETLVKSNMVIIAGELTTKAVIDPEKIARQAIREIGYCNRQDDDVFHADTVFFTNLLTEQSPDIAQGVDAREAEGKGHAEQGAGDQGIMFGFATNETPELLPAPIVFAHKLLIELARRRKRGHVDWLRPDCKSQVAVAYDEDGRPAHIENVVISTQHTEDVDHDTIYSYCVKLIKNVLPAELLDERTEYFINPTGKFVVGGPHGDSGLTGRKIIVDTYGGMGRHGGGAFSGKDPSKVDRSAAYMCRWVAKHIVAAGLADKCELQVAYAIGYPAPVSIRVDTFGTGKVEEISIENALENIFSFKPADMVEQLNLLRPIYRKTTHYGHFTNPELPWEQLDETRLASLKQLLH</sequence>
<name>METK_AKKM8</name>
<evidence type="ECO:0000255" key="1">
    <source>
        <dbReference type="HAMAP-Rule" id="MF_00086"/>
    </source>
</evidence>
<dbReference type="EC" id="2.5.1.6" evidence="1"/>
<dbReference type="EMBL" id="CP001071">
    <property type="protein sequence ID" value="ACD04894.1"/>
    <property type="molecule type" value="Genomic_DNA"/>
</dbReference>
<dbReference type="RefSeq" id="WP_012420109.1">
    <property type="nucleotide sequence ID" value="NZ_CP071807.1"/>
</dbReference>
<dbReference type="SMR" id="B2UR09"/>
<dbReference type="STRING" id="349741.Amuc_1068"/>
<dbReference type="PaxDb" id="349741-Amuc_1068"/>
<dbReference type="KEGG" id="amu:Amuc_1068"/>
<dbReference type="eggNOG" id="COG0192">
    <property type="taxonomic scope" value="Bacteria"/>
</dbReference>
<dbReference type="HOGENOM" id="CLU_041802_1_1_0"/>
<dbReference type="OrthoDB" id="9801686at2"/>
<dbReference type="BioCyc" id="AMUC349741:G1GBX-1142-MONOMER"/>
<dbReference type="UniPathway" id="UPA00315">
    <property type="reaction ID" value="UER00080"/>
</dbReference>
<dbReference type="Proteomes" id="UP000001031">
    <property type="component" value="Chromosome"/>
</dbReference>
<dbReference type="GO" id="GO:0005737">
    <property type="term" value="C:cytoplasm"/>
    <property type="evidence" value="ECO:0007669"/>
    <property type="project" value="UniProtKB-SubCell"/>
</dbReference>
<dbReference type="GO" id="GO:0005524">
    <property type="term" value="F:ATP binding"/>
    <property type="evidence" value="ECO:0007669"/>
    <property type="project" value="UniProtKB-UniRule"/>
</dbReference>
<dbReference type="GO" id="GO:0000287">
    <property type="term" value="F:magnesium ion binding"/>
    <property type="evidence" value="ECO:0007669"/>
    <property type="project" value="UniProtKB-UniRule"/>
</dbReference>
<dbReference type="GO" id="GO:0004478">
    <property type="term" value="F:methionine adenosyltransferase activity"/>
    <property type="evidence" value="ECO:0007669"/>
    <property type="project" value="UniProtKB-UniRule"/>
</dbReference>
<dbReference type="GO" id="GO:0006730">
    <property type="term" value="P:one-carbon metabolic process"/>
    <property type="evidence" value="ECO:0007669"/>
    <property type="project" value="UniProtKB-KW"/>
</dbReference>
<dbReference type="GO" id="GO:0006556">
    <property type="term" value="P:S-adenosylmethionine biosynthetic process"/>
    <property type="evidence" value="ECO:0007669"/>
    <property type="project" value="UniProtKB-UniRule"/>
</dbReference>
<dbReference type="CDD" id="cd18079">
    <property type="entry name" value="S-AdoMet_synt"/>
    <property type="match status" value="1"/>
</dbReference>
<dbReference type="FunFam" id="3.30.300.10:FF:000003">
    <property type="entry name" value="S-adenosylmethionine synthase"/>
    <property type="match status" value="1"/>
</dbReference>
<dbReference type="Gene3D" id="3.30.300.10">
    <property type="match status" value="3"/>
</dbReference>
<dbReference type="HAMAP" id="MF_00086">
    <property type="entry name" value="S_AdoMet_synth1"/>
    <property type="match status" value="1"/>
</dbReference>
<dbReference type="InterPro" id="IPR022631">
    <property type="entry name" value="ADOMET_SYNTHASE_CS"/>
</dbReference>
<dbReference type="InterPro" id="IPR022630">
    <property type="entry name" value="S-AdoMet_synt_C"/>
</dbReference>
<dbReference type="InterPro" id="IPR022629">
    <property type="entry name" value="S-AdoMet_synt_central"/>
</dbReference>
<dbReference type="InterPro" id="IPR022628">
    <property type="entry name" value="S-AdoMet_synt_N"/>
</dbReference>
<dbReference type="InterPro" id="IPR002133">
    <property type="entry name" value="S-AdoMet_synthetase"/>
</dbReference>
<dbReference type="InterPro" id="IPR022636">
    <property type="entry name" value="S-AdoMet_synthetase_sfam"/>
</dbReference>
<dbReference type="NCBIfam" id="TIGR01034">
    <property type="entry name" value="metK"/>
    <property type="match status" value="1"/>
</dbReference>
<dbReference type="PANTHER" id="PTHR11964">
    <property type="entry name" value="S-ADENOSYLMETHIONINE SYNTHETASE"/>
    <property type="match status" value="1"/>
</dbReference>
<dbReference type="Pfam" id="PF02773">
    <property type="entry name" value="S-AdoMet_synt_C"/>
    <property type="match status" value="1"/>
</dbReference>
<dbReference type="Pfam" id="PF02772">
    <property type="entry name" value="S-AdoMet_synt_M"/>
    <property type="match status" value="1"/>
</dbReference>
<dbReference type="Pfam" id="PF00438">
    <property type="entry name" value="S-AdoMet_synt_N"/>
    <property type="match status" value="1"/>
</dbReference>
<dbReference type="PIRSF" id="PIRSF000497">
    <property type="entry name" value="MAT"/>
    <property type="match status" value="1"/>
</dbReference>
<dbReference type="SUPFAM" id="SSF55973">
    <property type="entry name" value="S-adenosylmethionine synthetase"/>
    <property type="match status" value="3"/>
</dbReference>
<dbReference type="PROSITE" id="PS00376">
    <property type="entry name" value="ADOMET_SYNTHASE_1"/>
    <property type="match status" value="1"/>
</dbReference>
<dbReference type="PROSITE" id="PS00377">
    <property type="entry name" value="ADOMET_SYNTHASE_2"/>
    <property type="match status" value="1"/>
</dbReference>
<organism>
    <name type="scientific">Akkermansia muciniphila (strain ATCC BAA-835 / DSM 22959 / JCM 33894 / BCRC 81048 / CCUG 64013 / CIP 107961 / Muc)</name>
    <dbReference type="NCBI Taxonomy" id="349741"/>
    <lineage>
        <taxon>Bacteria</taxon>
        <taxon>Pseudomonadati</taxon>
        <taxon>Verrucomicrobiota</taxon>
        <taxon>Verrucomicrobiia</taxon>
        <taxon>Verrucomicrobiales</taxon>
        <taxon>Akkermansiaceae</taxon>
        <taxon>Akkermansia</taxon>
    </lineage>
</organism>
<gene>
    <name evidence="1" type="primary">metK</name>
    <name type="ordered locus">Amuc_1068</name>
</gene>
<reference key="1">
    <citation type="journal article" date="2011" name="PLoS ONE">
        <title>The genome of Akkermansia muciniphila, a dedicated intestinal mucin degrader, and its use in exploring intestinal metagenomes.</title>
        <authorList>
            <person name="van Passel M.W."/>
            <person name="Kant R."/>
            <person name="Zoetendal E.G."/>
            <person name="Plugge C.M."/>
            <person name="Derrien M."/>
            <person name="Malfatti S.A."/>
            <person name="Chain P.S."/>
            <person name="Woyke T."/>
            <person name="Palva A."/>
            <person name="de Vos W.M."/>
            <person name="Smidt H."/>
        </authorList>
    </citation>
    <scope>NUCLEOTIDE SEQUENCE [LARGE SCALE GENOMIC DNA]</scope>
    <source>
        <strain>ATCC BAA-835 / DSM 22959 / JCM 33894 / BCRC 81048 / CCUG 64013 / CIP 107961 / Muc</strain>
    </source>
</reference>
<accession>B2UR09</accession>
<keyword id="KW-0067">ATP-binding</keyword>
<keyword id="KW-0963">Cytoplasm</keyword>
<keyword id="KW-0460">Magnesium</keyword>
<keyword id="KW-0479">Metal-binding</keyword>
<keyword id="KW-0547">Nucleotide-binding</keyword>
<keyword id="KW-0554">One-carbon metabolism</keyword>
<keyword id="KW-0630">Potassium</keyword>
<keyword id="KW-1185">Reference proteome</keyword>
<keyword id="KW-0808">Transferase</keyword>
<proteinExistence type="inferred from homology"/>